<protein>
    <recommendedName>
        <fullName evidence="1">ATP synthase subunit a</fullName>
    </recommendedName>
    <alternativeName>
        <fullName evidence="1">ATP synthase F0 sector subunit a</fullName>
    </alternativeName>
    <alternativeName>
        <fullName evidence="1">F-ATPase subunit 6</fullName>
    </alternativeName>
</protein>
<feature type="chain" id="PRO_1000145325" description="ATP synthase subunit a">
    <location>
        <begin position="1"/>
        <end position="238"/>
    </location>
</feature>
<feature type="transmembrane region" description="Helical" evidence="1">
    <location>
        <begin position="15"/>
        <end position="35"/>
    </location>
</feature>
<feature type="transmembrane region" description="Helical" evidence="1">
    <location>
        <begin position="76"/>
        <end position="96"/>
    </location>
</feature>
<feature type="transmembrane region" description="Helical" evidence="1">
    <location>
        <begin position="111"/>
        <end position="131"/>
    </location>
</feature>
<feature type="transmembrane region" description="Helical" evidence="1">
    <location>
        <begin position="167"/>
        <end position="187"/>
    </location>
</feature>
<feature type="transmembrane region" description="Helical" evidence="1">
    <location>
        <begin position="208"/>
        <end position="230"/>
    </location>
</feature>
<dbReference type="EMBL" id="CP000410">
    <property type="protein sequence ID" value="ABJ54678.1"/>
    <property type="molecule type" value="Genomic_DNA"/>
</dbReference>
<dbReference type="RefSeq" id="WP_000392851.1">
    <property type="nucleotide sequence ID" value="NZ_JAMLJR010000008.1"/>
</dbReference>
<dbReference type="SMR" id="Q04HT4"/>
<dbReference type="PaxDb" id="373153-SPD_1340"/>
<dbReference type="GeneID" id="45653248"/>
<dbReference type="KEGG" id="spd:SPD_1340"/>
<dbReference type="eggNOG" id="COG0356">
    <property type="taxonomic scope" value="Bacteria"/>
</dbReference>
<dbReference type="HOGENOM" id="CLU_041018_2_3_9"/>
<dbReference type="BioCyc" id="SPNE373153:G1G6V-1445-MONOMER"/>
<dbReference type="Proteomes" id="UP000001452">
    <property type="component" value="Chromosome"/>
</dbReference>
<dbReference type="GO" id="GO:0005886">
    <property type="term" value="C:plasma membrane"/>
    <property type="evidence" value="ECO:0007669"/>
    <property type="project" value="UniProtKB-SubCell"/>
</dbReference>
<dbReference type="GO" id="GO:0045259">
    <property type="term" value="C:proton-transporting ATP synthase complex"/>
    <property type="evidence" value="ECO:0007669"/>
    <property type="project" value="UniProtKB-KW"/>
</dbReference>
<dbReference type="GO" id="GO:0046933">
    <property type="term" value="F:proton-transporting ATP synthase activity, rotational mechanism"/>
    <property type="evidence" value="ECO:0007669"/>
    <property type="project" value="UniProtKB-UniRule"/>
</dbReference>
<dbReference type="GO" id="GO:0042777">
    <property type="term" value="P:proton motive force-driven plasma membrane ATP synthesis"/>
    <property type="evidence" value="ECO:0007669"/>
    <property type="project" value="TreeGrafter"/>
</dbReference>
<dbReference type="CDD" id="cd00310">
    <property type="entry name" value="ATP-synt_Fo_a_6"/>
    <property type="match status" value="1"/>
</dbReference>
<dbReference type="Gene3D" id="1.20.120.220">
    <property type="entry name" value="ATP synthase, F0 complex, subunit A"/>
    <property type="match status" value="1"/>
</dbReference>
<dbReference type="HAMAP" id="MF_01393">
    <property type="entry name" value="ATP_synth_a_bact"/>
    <property type="match status" value="1"/>
</dbReference>
<dbReference type="InterPro" id="IPR045082">
    <property type="entry name" value="ATP_syn_F0_a_bact/chloroplast"/>
</dbReference>
<dbReference type="InterPro" id="IPR000568">
    <property type="entry name" value="ATP_synth_F0_asu"/>
</dbReference>
<dbReference type="InterPro" id="IPR035908">
    <property type="entry name" value="F0_ATP_A_sf"/>
</dbReference>
<dbReference type="NCBIfam" id="TIGR01131">
    <property type="entry name" value="ATP_synt_6_or_A"/>
    <property type="match status" value="1"/>
</dbReference>
<dbReference type="NCBIfam" id="NF004479">
    <property type="entry name" value="PRK05815.1-4"/>
    <property type="match status" value="1"/>
</dbReference>
<dbReference type="PANTHER" id="PTHR42823">
    <property type="entry name" value="ATP SYNTHASE SUBUNIT A, CHLOROPLASTIC"/>
    <property type="match status" value="1"/>
</dbReference>
<dbReference type="PANTHER" id="PTHR42823:SF3">
    <property type="entry name" value="ATP SYNTHASE SUBUNIT A, CHLOROPLASTIC"/>
    <property type="match status" value="1"/>
</dbReference>
<dbReference type="Pfam" id="PF00119">
    <property type="entry name" value="ATP-synt_A"/>
    <property type="match status" value="1"/>
</dbReference>
<dbReference type="PRINTS" id="PR00123">
    <property type="entry name" value="ATPASEA"/>
</dbReference>
<dbReference type="SUPFAM" id="SSF81336">
    <property type="entry name" value="F1F0 ATP synthase subunit A"/>
    <property type="match status" value="1"/>
</dbReference>
<keyword id="KW-0066">ATP synthesis</keyword>
<keyword id="KW-1003">Cell membrane</keyword>
<keyword id="KW-0138">CF(0)</keyword>
<keyword id="KW-0375">Hydrogen ion transport</keyword>
<keyword id="KW-0406">Ion transport</keyword>
<keyword id="KW-0472">Membrane</keyword>
<keyword id="KW-1185">Reference proteome</keyword>
<keyword id="KW-0812">Transmembrane</keyword>
<keyword id="KW-1133">Transmembrane helix</keyword>
<keyword id="KW-0813">Transport</keyword>
<gene>
    <name evidence="1" type="primary">atpB</name>
    <name type="ordered locus">SPD_1340</name>
</gene>
<reference key="1">
    <citation type="journal article" date="2007" name="J. Bacteriol.">
        <title>Genome sequence of Avery's virulent serotype 2 strain D39 of Streptococcus pneumoniae and comparison with that of unencapsulated laboratory strain R6.</title>
        <authorList>
            <person name="Lanie J.A."/>
            <person name="Ng W.-L."/>
            <person name="Kazmierczak K.M."/>
            <person name="Andrzejewski T.M."/>
            <person name="Davidsen T.M."/>
            <person name="Wayne K.J."/>
            <person name="Tettelin H."/>
            <person name="Glass J.I."/>
            <person name="Winkler M.E."/>
        </authorList>
    </citation>
    <scope>NUCLEOTIDE SEQUENCE [LARGE SCALE GENOMIC DNA]</scope>
    <source>
        <strain>D39 / NCTC 7466</strain>
    </source>
</reference>
<accession>Q04HT4</accession>
<sequence>MEESINPIISIGPVIFNLTMLAMTLLIVGVIFVFIYWASRNMTLKPKGKQNVLEYVYDFVIGFTEPNIGSRYMKDYSLFFLCLFLFMVIANNLGLMTKLQTIDGTNWWSSPTANLQYDLTLSFLVILLTHIESVRRRGFKKSIKSFMSPVFVIPMNILEEFTNFLSLALRIFGNIFAGEVMTSLLLLLSHQAIYWYPVAFGANLAWTAFSVFISCIQAYVFTLLTSVYLGNKINIEEE</sequence>
<proteinExistence type="inferred from homology"/>
<organism>
    <name type="scientific">Streptococcus pneumoniae serotype 2 (strain D39 / NCTC 7466)</name>
    <dbReference type="NCBI Taxonomy" id="373153"/>
    <lineage>
        <taxon>Bacteria</taxon>
        <taxon>Bacillati</taxon>
        <taxon>Bacillota</taxon>
        <taxon>Bacilli</taxon>
        <taxon>Lactobacillales</taxon>
        <taxon>Streptococcaceae</taxon>
        <taxon>Streptococcus</taxon>
    </lineage>
</organism>
<evidence type="ECO:0000255" key="1">
    <source>
        <dbReference type="HAMAP-Rule" id="MF_01393"/>
    </source>
</evidence>
<name>ATP6_STRP2</name>
<comment type="function">
    <text evidence="1">Key component of the proton channel; it plays a direct role in the translocation of protons across the membrane.</text>
</comment>
<comment type="subunit">
    <text evidence="1">F-type ATPases have 2 components, CF(1) - the catalytic core - and CF(0) - the membrane proton channel. CF(1) has five subunits: alpha(3), beta(3), gamma(1), delta(1), epsilon(1). CF(0) has three main subunits: a(1), b(2) and c(9-12). The alpha and beta chains form an alternating ring which encloses part of the gamma chain. CF(1) is attached to CF(0) by a central stalk formed by the gamma and epsilon chains, while a peripheral stalk is formed by the delta and b chains.</text>
</comment>
<comment type="subcellular location">
    <subcellularLocation>
        <location evidence="1">Cell membrane</location>
        <topology evidence="1">Multi-pass membrane protein</topology>
    </subcellularLocation>
</comment>
<comment type="similarity">
    <text evidence="1">Belongs to the ATPase A chain family.</text>
</comment>